<feature type="chain" id="PRO_0000399327" description="Adenylosuccinate synthetase">
    <location>
        <begin position="1"/>
        <end position="428"/>
    </location>
</feature>
<feature type="active site" description="Proton acceptor" evidence="2">
    <location>
        <position position="12"/>
    </location>
</feature>
<feature type="active site" description="Proton donor" evidence="2">
    <location>
        <position position="40"/>
    </location>
</feature>
<feature type="binding site" evidence="2">
    <location>
        <begin position="11"/>
        <end position="17"/>
    </location>
    <ligand>
        <name>GTP</name>
        <dbReference type="ChEBI" id="CHEBI:37565"/>
    </ligand>
</feature>
<feature type="binding site" description="in other chain" evidence="2">
    <location>
        <begin position="12"/>
        <end position="15"/>
    </location>
    <ligand>
        <name>IMP</name>
        <dbReference type="ChEBI" id="CHEBI:58053"/>
        <note>ligand shared between dimeric partners</note>
    </ligand>
</feature>
<feature type="binding site" evidence="2">
    <location>
        <position position="12"/>
    </location>
    <ligand>
        <name>Mg(2+)</name>
        <dbReference type="ChEBI" id="CHEBI:18420"/>
    </ligand>
</feature>
<feature type="binding site" description="in other chain" evidence="2">
    <location>
        <begin position="37"/>
        <end position="40"/>
    </location>
    <ligand>
        <name>IMP</name>
        <dbReference type="ChEBI" id="CHEBI:58053"/>
        <note>ligand shared between dimeric partners</note>
    </ligand>
</feature>
<feature type="binding site" evidence="2">
    <location>
        <begin position="39"/>
        <end position="41"/>
    </location>
    <ligand>
        <name>GTP</name>
        <dbReference type="ChEBI" id="CHEBI:37565"/>
    </ligand>
</feature>
<feature type="binding site" evidence="2">
    <location>
        <position position="39"/>
    </location>
    <ligand>
        <name>Mg(2+)</name>
        <dbReference type="ChEBI" id="CHEBI:18420"/>
    </ligand>
</feature>
<feature type="binding site" description="in other chain" evidence="2">
    <location>
        <position position="130"/>
    </location>
    <ligand>
        <name>IMP</name>
        <dbReference type="ChEBI" id="CHEBI:58053"/>
        <note>ligand shared between dimeric partners</note>
    </ligand>
</feature>
<feature type="binding site" evidence="2">
    <location>
        <position position="144"/>
    </location>
    <ligand>
        <name>IMP</name>
        <dbReference type="ChEBI" id="CHEBI:58053"/>
        <note>ligand shared between dimeric partners</note>
    </ligand>
</feature>
<feature type="binding site" description="in other chain" evidence="2">
    <location>
        <position position="226"/>
    </location>
    <ligand>
        <name>IMP</name>
        <dbReference type="ChEBI" id="CHEBI:58053"/>
        <note>ligand shared between dimeric partners</note>
    </ligand>
</feature>
<feature type="binding site" description="in other chain" evidence="2">
    <location>
        <position position="241"/>
    </location>
    <ligand>
        <name>IMP</name>
        <dbReference type="ChEBI" id="CHEBI:58053"/>
        <note>ligand shared between dimeric partners</note>
    </ligand>
</feature>
<feature type="binding site" evidence="2">
    <location>
        <begin position="301"/>
        <end position="307"/>
    </location>
    <ligand>
        <name>substrate</name>
    </ligand>
</feature>
<feature type="binding site" description="in other chain" evidence="2">
    <location>
        <position position="305"/>
    </location>
    <ligand>
        <name>IMP</name>
        <dbReference type="ChEBI" id="CHEBI:58053"/>
        <note>ligand shared between dimeric partners</note>
    </ligand>
</feature>
<feature type="binding site" evidence="2">
    <location>
        <position position="307"/>
    </location>
    <ligand>
        <name>GTP</name>
        <dbReference type="ChEBI" id="CHEBI:37565"/>
    </ligand>
</feature>
<feature type="binding site" evidence="2">
    <location>
        <begin position="333"/>
        <end position="335"/>
    </location>
    <ligand>
        <name>GTP</name>
        <dbReference type="ChEBI" id="CHEBI:37565"/>
    </ligand>
</feature>
<feature type="binding site" evidence="2">
    <location>
        <begin position="415"/>
        <end position="417"/>
    </location>
    <ligand>
        <name>GTP</name>
        <dbReference type="ChEBI" id="CHEBI:37565"/>
    </ligand>
</feature>
<comment type="function">
    <text evidence="1">Plays an important role in the de novo pathway and in the salvage pathway of purine nucleotide biosynthesis. Catalyzes the first committed step in the biosynthesis of AMP from IMP (By similarity).</text>
</comment>
<comment type="catalytic activity">
    <reaction evidence="2">
        <text>IMP + L-aspartate + GTP = N(6)-(1,2-dicarboxyethyl)-AMP + GDP + phosphate + 2 H(+)</text>
        <dbReference type="Rhea" id="RHEA:15753"/>
        <dbReference type="ChEBI" id="CHEBI:15378"/>
        <dbReference type="ChEBI" id="CHEBI:29991"/>
        <dbReference type="ChEBI" id="CHEBI:37565"/>
        <dbReference type="ChEBI" id="CHEBI:43474"/>
        <dbReference type="ChEBI" id="CHEBI:57567"/>
        <dbReference type="ChEBI" id="CHEBI:58053"/>
        <dbReference type="ChEBI" id="CHEBI:58189"/>
        <dbReference type="EC" id="6.3.4.4"/>
    </reaction>
</comment>
<comment type="cofactor">
    <cofactor evidence="2">
        <name>Mg(2+)</name>
        <dbReference type="ChEBI" id="CHEBI:18420"/>
    </cofactor>
    <text evidence="2">Binds 1 Mg(2+) ion per subunit.</text>
</comment>
<comment type="pathway">
    <text evidence="2">Purine metabolism; AMP biosynthesis via de novo pathway; AMP from IMP: step 1/2.</text>
</comment>
<comment type="subunit">
    <text evidence="2">Homodimer.</text>
</comment>
<comment type="subcellular location">
    <subcellularLocation>
        <location evidence="2">Cytoplasm</location>
    </subcellularLocation>
</comment>
<comment type="similarity">
    <text evidence="2">Belongs to the adenylosuccinate synthetase family.</text>
</comment>
<organism>
    <name type="scientific">Candida albicans (strain WO-1)</name>
    <name type="common">Yeast</name>
    <dbReference type="NCBI Taxonomy" id="294748"/>
    <lineage>
        <taxon>Eukaryota</taxon>
        <taxon>Fungi</taxon>
        <taxon>Dikarya</taxon>
        <taxon>Ascomycota</taxon>
        <taxon>Saccharomycotina</taxon>
        <taxon>Pichiomycetes</taxon>
        <taxon>Debaryomycetaceae</taxon>
        <taxon>Candida/Lodderomyces clade</taxon>
        <taxon>Candida</taxon>
    </lineage>
</organism>
<sequence length="428" mass="47889">MCDVVLGSQWGDEGKGKLVDLLCDDIDVCARCQGGNNAGHTIVVGKVKYDFHMLPSGLVNPKCQNLVGSGVVIHVPSFFAELENLEAKGLDCRDRLFVSSRAHLVFDFHQRTDKLKEAELSTNKKSIGTTGKGIGPTYSTKASRSGIRVHHLVNPDPEAWEEFKTRYLRLVESRQKRYGEFEYDPKEELARFEKYRETLRPFVVDSVNFMHEAIAANKKILVEGANALMLDIDFGTYPYVTSSSTGIGGVLTGLGIPPRTIRNVYGVVKAYTTRVGEGPFPTEQLNKVGETLQDVGAEYGVTTGRKRRCGWLDLVVLKYSNSINGYTSLNITKLDVLDKFKEIEVGVAYKLNGKELPSFPEDLIDLAKVEVVYKKFPGWEQDITGIKKYEDLPENAKNYLKFIEDYLQVPIQWVGTGPARDSMLEKKI</sequence>
<accession>P0CH97</accession>
<accession>C4YD76</accession>
<accession>Q5APD8</accession>
<gene>
    <name evidence="2" type="primary">ADE12</name>
    <name type="ORF">CAWG_00466</name>
</gene>
<proteinExistence type="inferred from homology"/>
<name>PURA_CANAW</name>
<evidence type="ECO:0000250" key="1"/>
<evidence type="ECO:0000255" key="2">
    <source>
        <dbReference type="HAMAP-Rule" id="MF_03125"/>
    </source>
</evidence>
<protein>
    <recommendedName>
        <fullName evidence="2">Adenylosuccinate synthetase</fullName>
        <shortName evidence="2">AMPSase</shortName>
        <shortName evidence="2">AdSS</shortName>
        <ecNumber evidence="2">6.3.4.4</ecNumber>
    </recommendedName>
    <alternativeName>
        <fullName evidence="2">IMP--aspartate ligase</fullName>
    </alternativeName>
</protein>
<reference key="1">
    <citation type="journal article" date="2009" name="Nature">
        <title>Evolution of pathogenicity and sexual reproduction in eight Candida genomes.</title>
        <authorList>
            <person name="Butler G."/>
            <person name="Rasmussen M.D."/>
            <person name="Lin M.F."/>
            <person name="Santos M.A.S."/>
            <person name="Sakthikumar S."/>
            <person name="Munro C.A."/>
            <person name="Rheinbay E."/>
            <person name="Grabherr M."/>
            <person name="Forche A."/>
            <person name="Reedy J.L."/>
            <person name="Agrafioti I."/>
            <person name="Arnaud M.B."/>
            <person name="Bates S."/>
            <person name="Brown A.J.P."/>
            <person name="Brunke S."/>
            <person name="Costanzo M.C."/>
            <person name="Fitzpatrick D.A."/>
            <person name="de Groot P.W.J."/>
            <person name="Harris D."/>
            <person name="Hoyer L.L."/>
            <person name="Hube B."/>
            <person name="Klis F.M."/>
            <person name="Kodira C."/>
            <person name="Lennard N."/>
            <person name="Logue M.E."/>
            <person name="Martin R."/>
            <person name="Neiman A.M."/>
            <person name="Nikolaou E."/>
            <person name="Quail M.A."/>
            <person name="Quinn J."/>
            <person name="Santos M.C."/>
            <person name="Schmitzberger F.F."/>
            <person name="Sherlock G."/>
            <person name="Shah P."/>
            <person name="Silverstein K.A.T."/>
            <person name="Skrzypek M.S."/>
            <person name="Soll D."/>
            <person name="Staggs R."/>
            <person name="Stansfield I."/>
            <person name="Stumpf M.P.H."/>
            <person name="Sudbery P.E."/>
            <person name="Srikantha T."/>
            <person name="Zeng Q."/>
            <person name="Berman J."/>
            <person name="Berriman M."/>
            <person name="Heitman J."/>
            <person name="Gow N.A.R."/>
            <person name="Lorenz M.C."/>
            <person name="Birren B.W."/>
            <person name="Kellis M."/>
            <person name="Cuomo C.A."/>
        </authorList>
    </citation>
    <scope>NUCLEOTIDE SEQUENCE [LARGE SCALE GENOMIC DNA]</scope>
    <source>
        <strain>WO-1</strain>
    </source>
</reference>
<keyword id="KW-0963">Cytoplasm</keyword>
<keyword id="KW-0342">GTP-binding</keyword>
<keyword id="KW-0436">Ligase</keyword>
<keyword id="KW-0460">Magnesium</keyword>
<keyword id="KW-0479">Metal-binding</keyword>
<keyword id="KW-0547">Nucleotide-binding</keyword>
<keyword id="KW-0658">Purine biosynthesis</keyword>
<dbReference type="EC" id="6.3.4.4" evidence="2"/>
<dbReference type="EMBL" id="CH672346">
    <property type="protein sequence ID" value="EEQ42262.1"/>
    <property type="molecule type" value="Genomic_DNA"/>
</dbReference>
<dbReference type="SMR" id="P0CH97"/>
<dbReference type="PaxDb" id="5476-P0CH97"/>
<dbReference type="VEuPathDB" id="FungiDB:CAWG_00466"/>
<dbReference type="HOGENOM" id="CLU_029848_3_2_1"/>
<dbReference type="OMA" id="FHHAKPI"/>
<dbReference type="OrthoDB" id="10563at766764"/>
<dbReference type="UniPathway" id="UPA00075">
    <property type="reaction ID" value="UER00335"/>
</dbReference>
<dbReference type="Proteomes" id="UP000001429">
    <property type="component" value="Chromosome 1, Supercontig 1.1"/>
</dbReference>
<dbReference type="GO" id="GO:0005737">
    <property type="term" value="C:cytoplasm"/>
    <property type="evidence" value="ECO:0007669"/>
    <property type="project" value="UniProtKB-SubCell"/>
</dbReference>
<dbReference type="GO" id="GO:0004019">
    <property type="term" value="F:adenylosuccinate synthase activity"/>
    <property type="evidence" value="ECO:0007669"/>
    <property type="project" value="UniProtKB-UniRule"/>
</dbReference>
<dbReference type="GO" id="GO:0005525">
    <property type="term" value="F:GTP binding"/>
    <property type="evidence" value="ECO:0007669"/>
    <property type="project" value="UniProtKB-UniRule"/>
</dbReference>
<dbReference type="GO" id="GO:0000287">
    <property type="term" value="F:magnesium ion binding"/>
    <property type="evidence" value="ECO:0007669"/>
    <property type="project" value="UniProtKB-UniRule"/>
</dbReference>
<dbReference type="GO" id="GO:0044208">
    <property type="term" value="P:'de novo' AMP biosynthetic process"/>
    <property type="evidence" value="ECO:0007669"/>
    <property type="project" value="UniProtKB-UniRule"/>
</dbReference>
<dbReference type="GO" id="GO:0046040">
    <property type="term" value="P:IMP metabolic process"/>
    <property type="evidence" value="ECO:0007669"/>
    <property type="project" value="TreeGrafter"/>
</dbReference>
<dbReference type="CDD" id="cd03108">
    <property type="entry name" value="AdSS"/>
    <property type="match status" value="1"/>
</dbReference>
<dbReference type="FunFam" id="3.90.170.10:FF:000001">
    <property type="entry name" value="Adenylosuccinate synthetase"/>
    <property type="match status" value="1"/>
</dbReference>
<dbReference type="FunFam" id="1.10.300.10:FF:000002">
    <property type="entry name" value="Adenylosuccinate synthetase, chloroplastic"/>
    <property type="match status" value="1"/>
</dbReference>
<dbReference type="Gene3D" id="3.40.440.10">
    <property type="entry name" value="Adenylosuccinate Synthetase, subunit A, domain 1"/>
    <property type="match status" value="1"/>
</dbReference>
<dbReference type="Gene3D" id="1.10.300.10">
    <property type="entry name" value="Adenylosuccinate Synthetase, subunit A, domain 2"/>
    <property type="match status" value="1"/>
</dbReference>
<dbReference type="Gene3D" id="3.90.170.10">
    <property type="entry name" value="Adenylosuccinate Synthetase, subunit A, domain 3"/>
    <property type="match status" value="1"/>
</dbReference>
<dbReference type="HAMAP" id="MF_00011">
    <property type="entry name" value="Adenylosucc_synth"/>
    <property type="match status" value="1"/>
</dbReference>
<dbReference type="InterPro" id="IPR018220">
    <property type="entry name" value="Adenylosuccin_syn_GTP-bd"/>
</dbReference>
<dbReference type="InterPro" id="IPR033128">
    <property type="entry name" value="Adenylosuccin_syn_Lys_AS"/>
</dbReference>
<dbReference type="InterPro" id="IPR042109">
    <property type="entry name" value="Adenylosuccinate_synth_dom1"/>
</dbReference>
<dbReference type="InterPro" id="IPR042110">
    <property type="entry name" value="Adenylosuccinate_synth_dom2"/>
</dbReference>
<dbReference type="InterPro" id="IPR042111">
    <property type="entry name" value="Adenylosuccinate_synth_dom3"/>
</dbReference>
<dbReference type="InterPro" id="IPR001114">
    <property type="entry name" value="Adenylosuccinate_synthetase"/>
</dbReference>
<dbReference type="InterPro" id="IPR027417">
    <property type="entry name" value="P-loop_NTPase"/>
</dbReference>
<dbReference type="NCBIfam" id="NF002223">
    <property type="entry name" value="PRK01117.1"/>
    <property type="match status" value="1"/>
</dbReference>
<dbReference type="NCBIfam" id="TIGR00184">
    <property type="entry name" value="purA"/>
    <property type="match status" value="1"/>
</dbReference>
<dbReference type="PANTHER" id="PTHR11846">
    <property type="entry name" value="ADENYLOSUCCINATE SYNTHETASE"/>
    <property type="match status" value="1"/>
</dbReference>
<dbReference type="PANTHER" id="PTHR11846:SF0">
    <property type="entry name" value="ADENYLOSUCCINATE SYNTHETASE"/>
    <property type="match status" value="1"/>
</dbReference>
<dbReference type="Pfam" id="PF00709">
    <property type="entry name" value="Adenylsucc_synt"/>
    <property type="match status" value="1"/>
</dbReference>
<dbReference type="SMART" id="SM00788">
    <property type="entry name" value="Adenylsucc_synt"/>
    <property type="match status" value="1"/>
</dbReference>
<dbReference type="SUPFAM" id="SSF52540">
    <property type="entry name" value="P-loop containing nucleoside triphosphate hydrolases"/>
    <property type="match status" value="1"/>
</dbReference>
<dbReference type="PROSITE" id="PS01266">
    <property type="entry name" value="ADENYLOSUCCIN_SYN_1"/>
    <property type="match status" value="1"/>
</dbReference>
<dbReference type="PROSITE" id="PS00513">
    <property type="entry name" value="ADENYLOSUCCIN_SYN_2"/>
    <property type="match status" value="1"/>
</dbReference>